<dbReference type="EC" id="6.3.5.3" evidence="1"/>
<dbReference type="EMBL" id="BX572598">
    <property type="protein sequence ID" value="CAE27038.1"/>
    <property type="molecule type" value="Genomic_DNA"/>
</dbReference>
<dbReference type="RefSeq" id="WP_011157156.1">
    <property type="nucleotide sequence ID" value="NZ_CP116810.1"/>
</dbReference>
<dbReference type="SMR" id="Q6N9F2"/>
<dbReference type="STRING" id="258594.RPA1597"/>
<dbReference type="GeneID" id="66892628"/>
<dbReference type="eggNOG" id="COG0046">
    <property type="taxonomic scope" value="Bacteria"/>
</dbReference>
<dbReference type="HOGENOM" id="CLU_003100_0_1_5"/>
<dbReference type="PhylomeDB" id="Q6N9F2"/>
<dbReference type="UniPathway" id="UPA00074">
    <property type="reaction ID" value="UER00128"/>
</dbReference>
<dbReference type="GO" id="GO:0005737">
    <property type="term" value="C:cytoplasm"/>
    <property type="evidence" value="ECO:0007669"/>
    <property type="project" value="UniProtKB-SubCell"/>
</dbReference>
<dbReference type="GO" id="GO:0005524">
    <property type="term" value="F:ATP binding"/>
    <property type="evidence" value="ECO:0007669"/>
    <property type="project" value="UniProtKB-UniRule"/>
</dbReference>
<dbReference type="GO" id="GO:0000287">
    <property type="term" value="F:magnesium ion binding"/>
    <property type="evidence" value="ECO:0007669"/>
    <property type="project" value="UniProtKB-UniRule"/>
</dbReference>
<dbReference type="GO" id="GO:0004642">
    <property type="term" value="F:phosphoribosylformylglycinamidine synthase activity"/>
    <property type="evidence" value="ECO:0007669"/>
    <property type="project" value="UniProtKB-UniRule"/>
</dbReference>
<dbReference type="GO" id="GO:0006189">
    <property type="term" value="P:'de novo' IMP biosynthetic process"/>
    <property type="evidence" value="ECO:0007669"/>
    <property type="project" value="UniProtKB-UniRule"/>
</dbReference>
<dbReference type="CDD" id="cd02203">
    <property type="entry name" value="PurL_repeat1"/>
    <property type="match status" value="1"/>
</dbReference>
<dbReference type="CDD" id="cd02204">
    <property type="entry name" value="PurL_repeat2"/>
    <property type="match status" value="1"/>
</dbReference>
<dbReference type="FunFam" id="3.30.1330.10:FF:000004">
    <property type="entry name" value="Phosphoribosylformylglycinamidine synthase subunit PurL"/>
    <property type="match status" value="1"/>
</dbReference>
<dbReference type="Gene3D" id="3.90.650.10">
    <property type="entry name" value="PurM-like C-terminal domain"/>
    <property type="match status" value="2"/>
</dbReference>
<dbReference type="Gene3D" id="3.30.1330.10">
    <property type="entry name" value="PurM-like, N-terminal domain"/>
    <property type="match status" value="2"/>
</dbReference>
<dbReference type="HAMAP" id="MF_00420">
    <property type="entry name" value="PurL_2"/>
    <property type="match status" value="1"/>
</dbReference>
<dbReference type="InterPro" id="IPR010074">
    <property type="entry name" value="PRibForGlyAmidine_synth_PurL"/>
</dbReference>
<dbReference type="InterPro" id="IPR041609">
    <property type="entry name" value="PurL_linker"/>
</dbReference>
<dbReference type="InterPro" id="IPR010918">
    <property type="entry name" value="PurM-like_C_dom"/>
</dbReference>
<dbReference type="InterPro" id="IPR036676">
    <property type="entry name" value="PurM-like_C_sf"/>
</dbReference>
<dbReference type="InterPro" id="IPR016188">
    <property type="entry name" value="PurM-like_N"/>
</dbReference>
<dbReference type="InterPro" id="IPR036921">
    <property type="entry name" value="PurM-like_N_sf"/>
</dbReference>
<dbReference type="NCBIfam" id="TIGR01736">
    <property type="entry name" value="FGAM_synth_II"/>
    <property type="match status" value="1"/>
</dbReference>
<dbReference type="NCBIfam" id="NF002290">
    <property type="entry name" value="PRK01213.1"/>
    <property type="match status" value="1"/>
</dbReference>
<dbReference type="PANTHER" id="PTHR43555">
    <property type="entry name" value="PHOSPHORIBOSYLFORMYLGLYCINAMIDINE SYNTHASE SUBUNIT PURL"/>
    <property type="match status" value="1"/>
</dbReference>
<dbReference type="PANTHER" id="PTHR43555:SF1">
    <property type="entry name" value="PHOSPHORIBOSYLFORMYLGLYCINAMIDINE SYNTHASE SUBUNIT PURL"/>
    <property type="match status" value="1"/>
</dbReference>
<dbReference type="Pfam" id="PF00586">
    <property type="entry name" value="AIRS"/>
    <property type="match status" value="2"/>
</dbReference>
<dbReference type="Pfam" id="PF02769">
    <property type="entry name" value="AIRS_C"/>
    <property type="match status" value="2"/>
</dbReference>
<dbReference type="Pfam" id="PF18072">
    <property type="entry name" value="FGAR-AT_linker"/>
    <property type="match status" value="1"/>
</dbReference>
<dbReference type="PIRSF" id="PIRSF001587">
    <property type="entry name" value="FGAM_synthase_II"/>
    <property type="match status" value="1"/>
</dbReference>
<dbReference type="SUPFAM" id="SSF56042">
    <property type="entry name" value="PurM C-terminal domain-like"/>
    <property type="match status" value="2"/>
</dbReference>
<dbReference type="SUPFAM" id="SSF55326">
    <property type="entry name" value="PurM N-terminal domain-like"/>
    <property type="match status" value="2"/>
</dbReference>
<proteinExistence type="inferred from homology"/>
<sequence length="736" mass="78471">MSAPEPKITPELIASHGLKPDEYQRILDLIGREPTFTELGIFSAMWNEHCSYKSSRIHLKGLPTKAPWVLQGPGENAGVIDIGDNQAVVFKMESHNHPSYIEPYQGATTGVGGILRDVFTMGARPIACLNALSFGDPSHPKTRHLVSGVVAGVGGYGNSFGVPTVGGQTRFHTRYDGNILVNAMAVGLADADKIFLAAASGVGMPIVYLGSKTGRDGMGGATMASAEFDEGSDEKRPTVQVGDPFAEKLLLEACLEIMAKDCVIAIQDMGAAGLTCSAVEMGAKGDLGVELDLDAVPTRETGMTAYEMMLSESQERMLMVLKPEKEKEAEEIFKKWGLDFAIVGYTTPTKRFVVKHGGQVKADLPIKELGDEAPLYDRPWVESERLPVIHARDINAPMGAAEALEKLLATPDLCSKRWVWEQYDHVIGGNTVQRPGGDAAVVRIEDGPKGLALTVDVTPRYCEADPFEGGKQAVAEAYRNITAVGGKPLAITDNLNFGNPERPEIMGQLVGCLKGISEACIALDSPIVSGNVSLYNETSGRGILPTPSIGGVGVLDDFTKSATLAFKAEGEAILLIGETKGWLGQSVYLREICGREEGAPPPVDLAVEKRHGDVVRGMIHAGTATAVHDVSDGGLLVAIAEMAIAGNIGASLDAPPGETVSHAWWFGEDQARYVVTVKEADLLAVKTKLKTIGVPCTQIGVTGGHALKIEGERTVDLKALRHAHEHWLPDYMGGKN</sequence>
<comment type="function">
    <text evidence="1">Part of the phosphoribosylformylglycinamidine synthase complex involved in the purines biosynthetic pathway. Catalyzes the ATP-dependent conversion of formylglycinamide ribonucleotide (FGAR) and glutamine to yield formylglycinamidine ribonucleotide (FGAM) and glutamate. The FGAM synthase complex is composed of three subunits. PurQ produces an ammonia molecule by converting glutamine to glutamate. PurL transfers the ammonia molecule to FGAR to form FGAM in an ATP-dependent manner. PurS interacts with PurQ and PurL and is thought to assist in the transfer of the ammonia molecule from PurQ to PurL.</text>
</comment>
<comment type="catalytic activity">
    <reaction evidence="1">
        <text>N(2)-formyl-N(1)-(5-phospho-beta-D-ribosyl)glycinamide + L-glutamine + ATP + H2O = 2-formamido-N(1)-(5-O-phospho-beta-D-ribosyl)acetamidine + L-glutamate + ADP + phosphate + H(+)</text>
        <dbReference type="Rhea" id="RHEA:17129"/>
        <dbReference type="ChEBI" id="CHEBI:15377"/>
        <dbReference type="ChEBI" id="CHEBI:15378"/>
        <dbReference type="ChEBI" id="CHEBI:29985"/>
        <dbReference type="ChEBI" id="CHEBI:30616"/>
        <dbReference type="ChEBI" id="CHEBI:43474"/>
        <dbReference type="ChEBI" id="CHEBI:58359"/>
        <dbReference type="ChEBI" id="CHEBI:147286"/>
        <dbReference type="ChEBI" id="CHEBI:147287"/>
        <dbReference type="ChEBI" id="CHEBI:456216"/>
        <dbReference type="EC" id="6.3.5.3"/>
    </reaction>
</comment>
<comment type="pathway">
    <text evidence="1">Purine metabolism; IMP biosynthesis via de novo pathway; 5-amino-1-(5-phospho-D-ribosyl)imidazole from N(2)-formyl-N(1)-(5-phospho-D-ribosyl)glycinamide: step 1/2.</text>
</comment>
<comment type="subunit">
    <text evidence="1">Monomer. Part of the FGAM synthase complex composed of 1 PurL, 1 PurQ and 2 PurS subunits.</text>
</comment>
<comment type="subcellular location">
    <subcellularLocation>
        <location evidence="1">Cytoplasm</location>
    </subcellularLocation>
</comment>
<comment type="similarity">
    <text evidence="1">Belongs to the FGAMS family.</text>
</comment>
<reference key="1">
    <citation type="journal article" date="2004" name="Nat. Biotechnol.">
        <title>Complete genome sequence of the metabolically versatile photosynthetic bacterium Rhodopseudomonas palustris.</title>
        <authorList>
            <person name="Larimer F.W."/>
            <person name="Chain P."/>
            <person name="Hauser L."/>
            <person name="Lamerdin J.E."/>
            <person name="Malfatti S."/>
            <person name="Do L."/>
            <person name="Land M.L."/>
            <person name="Pelletier D.A."/>
            <person name="Beatty J.T."/>
            <person name="Lang A.S."/>
            <person name="Tabita F.R."/>
            <person name="Gibson J.L."/>
            <person name="Hanson T.E."/>
            <person name="Bobst C."/>
            <person name="Torres y Torres J.L."/>
            <person name="Peres C."/>
            <person name="Harrison F.H."/>
            <person name="Gibson J."/>
            <person name="Harwood C.S."/>
        </authorList>
    </citation>
    <scope>NUCLEOTIDE SEQUENCE [LARGE SCALE GENOMIC DNA]</scope>
    <source>
        <strain>ATCC BAA-98 / CGA009</strain>
    </source>
</reference>
<name>PURL_RHOPA</name>
<gene>
    <name evidence="1" type="primary">purL</name>
    <name type="ordered locus">RPA1597</name>
</gene>
<accession>Q6N9F2</accession>
<protein>
    <recommendedName>
        <fullName evidence="1">Phosphoribosylformylglycinamidine synthase subunit PurL</fullName>
        <shortName evidence="1">FGAM synthase</shortName>
        <ecNumber evidence="1">6.3.5.3</ecNumber>
    </recommendedName>
    <alternativeName>
        <fullName evidence="1">Formylglycinamide ribonucleotide amidotransferase subunit II</fullName>
        <shortName evidence="1">FGAR amidotransferase II</shortName>
        <shortName evidence="1">FGAR-AT II</shortName>
    </alternativeName>
    <alternativeName>
        <fullName evidence="1">Glutamine amidotransferase PurL</fullName>
    </alternativeName>
    <alternativeName>
        <fullName evidence="1">Phosphoribosylformylglycinamidine synthase subunit II</fullName>
    </alternativeName>
</protein>
<feature type="chain" id="PRO_0000100483" description="Phosphoribosylformylglycinamidine synthase subunit PurL">
    <location>
        <begin position="1"/>
        <end position="736"/>
    </location>
</feature>
<feature type="active site" evidence="1">
    <location>
        <position position="49"/>
    </location>
</feature>
<feature type="active site" description="Proton acceptor" evidence="1">
    <location>
        <position position="95"/>
    </location>
</feature>
<feature type="binding site" evidence="1">
    <location>
        <position position="52"/>
    </location>
    <ligand>
        <name>ATP</name>
        <dbReference type="ChEBI" id="CHEBI:30616"/>
    </ligand>
</feature>
<feature type="binding site" evidence="1">
    <location>
        <position position="91"/>
    </location>
    <ligand>
        <name>ATP</name>
        <dbReference type="ChEBI" id="CHEBI:30616"/>
    </ligand>
</feature>
<feature type="binding site" evidence="1">
    <location>
        <position position="93"/>
    </location>
    <ligand>
        <name>Mg(2+)</name>
        <dbReference type="ChEBI" id="CHEBI:18420"/>
        <label>1</label>
    </ligand>
</feature>
<feature type="binding site" evidence="1">
    <location>
        <begin position="94"/>
        <end position="97"/>
    </location>
    <ligand>
        <name>substrate</name>
    </ligand>
</feature>
<feature type="binding site" evidence="1">
    <location>
        <position position="116"/>
    </location>
    <ligand>
        <name>substrate</name>
    </ligand>
</feature>
<feature type="binding site" evidence="1">
    <location>
        <position position="117"/>
    </location>
    <ligand>
        <name>Mg(2+)</name>
        <dbReference type="ChEBI" id="CHEBI:18420"/>
        <label>2</label>
    </ligand>
</feature>
<feature type="binding site" evidence="1">
    <location>
        <position position="240"/>
    </location>
    <ligand>
        <name>substrate</name>
    </ligand>
</feature>
<feature type="binding site" evidence="1">
    <location>
        <position position="268"/>
    </location>
    <ligand>
        <name>Mg(2+)</name>
        <dbReference type="ChEBI" id="CHEBI:18420"/>
        <label>2</label>
    </ligand>
</feature>
<feature type="binding site" evidence="1">
    <location>
        <begin position="312"/>
        <end position="314"/>
    </location>
    <ligand>
        <name>substrate</name>
    </ligand>
</feature>
<feature type="binding site" evidence="1">
    <location>
        <position position="493"/>
    </location>
    <ligand>
        <name>ATP</name>
        <dbReference type="ChEBI" id="CHEBI:30616"/>
    </ligand>
</feature>
<feature type="binding site" evidence="1">
    <location>
        <position position="530"/>
    </location>
    <ligand>
        <name>ATP</name>
        <dbReference type="ChEBI" id="CHEBI:30616"/>
    </ligand>
</feature>
<feature type="binding site" evidence="1">
    <location>
        <position position="531"/>
    </location>
    <ligand>
        <name>Mg(2+)</name>
        <dbReference type="ChEBI" id="CHEBI:18420"/>
        <label>1</label>
    </ligand>
</feature>
<feature type="binding site" evidence="1">
    <location>
        <position position="533"/>
    </location>
    <ligand>
        <name>substrate</name>
    </ligand>
</feature>
<keyword id="KW-0067">ATP-binding</keyword>
<keyword id="KW-0963">Cytoplasm</keyword>
<keyword id="KW-0436">Ligase</keyword>
<keyword id="KW-0460">Magnesium</keyword>
<keyword id="KW-0479">Metal-binding</keyword>
<keyword id="KW-0547">Nucleotide-binding</keyword>
<keyword id="KW-0658">Purine biosynthesis</keyword>
<evidence type="ECO:0000255" key="1">
    <source>
        <dbReference type="HAMAP-Rule" id="MF_00420"/>
    </source>
</evidence>
<organism>
    <name type="scientific">Rhodopseudomonas palustris (strain ATCC BAA-98 / CGA009)</name>
    <dbReference type="NCBI Taxonomy" id="258594"/>
    <lineage>
        <taxon>Bacteria</taxon>
        <taxon>Pseudomonadati</taxon>
        <taxon>Pseudomonadota</taxon>
        <taxon>Alphaproteobacteria</taxon>
        <taxon>Hyphomicrobiales</taxon>
        <taxon>Nitrobacteraceae</taxon>
        <taxon>Rhodopseudomonas</taxon>
    </lineage>
</organism>